<gene>
    <name type="ORF">SPAC22A12.17c</name>
</gene>
<reference key="1">
    <citation type="journal article" date="2002" name="Nature">
        <title>The genome sequence of Schizosaccharomyces pombe.</title>
        <authorList>
            <person name="Wood V."/>
            <person name="Gwilliam R."/>
            <person name="Rajandream M.A."/>
            <person name="Lyne M.H."/>
            <person name="Lyne R."/>
            <person name="Stewart A."/>
            <person name="Sgouros J.G."/>
            <person name="Peat N."/>
            <person name="Hayles J."/>
            <person name="Baker S.G."/>
            <person name="Basham D."/>
            <person name="Bowman S."/>
            <person name="Brooks K."/>
            <person name="Brown D."/>
            <person name="Brown S."/>
            <person name="Chillingworth T."/>
            <person name="Churcher C.M."/>
            <person name="Collins M."/>
            <person name="Connor R."/>
            <person name="Cronin A."/>
            <person name="Davis P."/>
            <person name="Feltwell T."/>
            <person name="Fraser A."/>
            <person name="Gentles S."/>
            <person name="Goble A."/>
            <person name="Hamlin N."/>
            <person name="Harris D.E."/>
            <person name="Hidalgo J."/>
            <person name="Hodgson G."/>
            <person name="Holroyd S."/>
            <person name="Hornsby T."/>
            <person name="Howarth S."/>
            <person name="Huckle E.J."/>
            <person name="Hunt S."/>
            <person name="Jagels K."/>
            <person name="James K.D."/>
            <person name="Jones L."/>
            <person name="Jones M."/>
            <person name="Leather S."/>
            <person name="McDonald S."/>
            <person name="McLean J."/>
            <person name="Mooney P."/>
            <person name="Moule S."/>
            <person name="Mungall K.L."/>
            <person name="Murphy L.D."/>
            <person name="Niblett D."/>
            <person name="Odell C."/>
            <person name="Oliver K."/>
            <person name="O'Neil S."/>
            <person name="Pearson D."/>
            <person name="Quail M.A."/>
            <person name="Rabbinowitsch E."/>
            <person name="Rutherford K.M."/>
            <person name="Rutter S."/>
            <person name="Saunders D."/>
            <person name="Seeger K."/>
            <person name="Sharp S."/>
            <person name="Skelton J."/>
            <person name="Simmonds M.N."/>
            <person name="Squares R."/>
            <person name="Squares S."/>
            <person name="Stevens K."/>
            <person name="Taylor K."/>
            <person name="Taylor R.G."/>
            <person name="Tivey A."/>
            <person name="Walsh S.V."/>
            <person name="Warren T."/>
            <person name="Whitehead S."/>
            <person name="Woodward J.R."/>
            <person name="Volckaert G."/>
            <person name="Aert R."/>
            <person name="Robben J."/>
            <person name="Grymonprez B."/>
            <person name="Weltjens I."/>
            <person name="Vanstreels E."/>
            <person name="Rieger M."/>
            <person name="Schaefer M."/>
            <person name="Mueller-Auer S."/>
            <person name="Gabel C."/>
            <person name="Fuchs M."/>
            <person name="Duesterhoeft A."/>
            <person name="Fritzc C."/>
            <person name="Holzer E."/>
            <person name="Moestl D."/>
            <person name="Hilbert H."/>
            <person name="Borzym K."/>
            <person name="Langer I."/>
            <person name="Beck A."/>
            <person name="Lehrach H."/>
            <person name="Reinhardt R."/>
            <person name="Pohl T.M."/>
            <person name="Eger P."/>
            <person name="Zimmermann W."/>
            <person name="Wedler H."/>
            <person name="Wambutt R."/>
            <person name="Purnelle B."/>
            <person name="Goffeau A."/>
            <person name="Cadieu E."/>
            <person name="Dreano S."/>
            <person name="Gloux S."/>
            <person name="Lelaure V."/>
            <person name="Mottier S."/>
            <person name="Galibert F."/>
            <person name="Aves S.J."/>
            <person name="Xiang Z."/>
            <person name="Hunt C."/>
            <person name="Moore K."/>
            <person name="Hurst S.M."/>
            <person name="Lucas M."/>
            <person name="Rochet M."/>
            <person name="Gaillardin C."/>
            <person name="Tallada V.A."/>
            <person name="Garzon A."/>
            <person name="Thode G."/>
            <person name="Daga R.R."/>
            <person name="Cruzado L."/>
            <person name="Jimenez J."/>
            <person name="Sanchez M."/>
            <person name="del Rey F."/>
            <person name="Benito J."/>
            <person name="Dominguez A."/>
            <person name="Revuelta J.L."/>
            <person name="Moreno S."/>
            <person name="Armstrong J."/>
            <person name="Forsburg S.L."/>
            <person name="Cerutti L."/>
            <person name="Lowe T."/>
            <person name="McCombie W.R."/>
            <person name="Paulsen I."/>
            <person name="Potashkin J."/>
            <person name="Shpakovski G.V."/>
            <person name="Ussery D."/>
            <person name="Barrell B.G."/>
            <person name="Nurse P."/>
        </authorList>
    </citation>
    <scope>NUCLEOTIDE SEQUENCE [LARGE SCALE GENOMIC DNA]</scope>
    <source>
        <strain>972 / ATCC 24843</strain>
    </source>
</reference>
<reference key="2">
    <citation type="journal article" date="2006" name="Nat. Biotechnol.">
        <title>ORFeome cloning and global analysis of protein localization in the fission yeast Schizosaccharomyces pombe.</title>
        <authorList>
            <person name="Matsuyama A."/>
            <person name="Arai R."/>
            <person name="Yashiroda Y."/>
            <person name="Shirai A."/>
            <person name="Kamata A."/>
            <person name="Sekido S."/>
            <person name="Kobayashi Y."/>
            <person name="Hashimoto A."/>
            <person name="Hamamoto M."/>
            <person name="Hiraoka Y."/>
            <person name="Horinouchi S."/>
            <person name="Yoshida M."/>
        </authorList>
    </citation>
    <scope>SUBCELLULAR LOCATION [LARGE SCALE ANALYSIS]</scope>
</reference>
<feature type="chain" id="PRO_0000310837" description="Uncharacterized oxidoreductase C22A12.17c">
    <location>
        <begin position="1"/>
        <end position="261"/>
    </location>
</feature>
<feature type="active site" description="Proton donor" evidence="2">
    <location>
        <position position="157"/>
    </location>
</feature>
<feature type="active site" description="Proton acceptor" evidence="3">
    <location>
        <position position="172"/>
    </location>
</feature>
<feature type="active site" description="Lowers pKa of active site Tyr" evidence="2">
    <location>
        <position position="176"/>
    </location>
</feature>
<feature type="binding site" evidence="1">
    <location>
        <position position="33"/>
    </location>
    <ligand>
        <name>NADP(+)</name>
        <dbReference type="ChEBI" id="CHEBI:58349"/>
    </ligand>
</feature>
<feature type="binding site" evidence="1">
    <location>
        <position position="78"/>
    </location>
    <ligand>
        <name>NADP(+)</name>
        <dbReference type="ChEBI" id="CHEBI:58349"/>
    </ligand>
</feature>
<feature type="binding site" evidence="2">
    <location>
        <position position="105"/>
    </location>
    <ligand>
        <name>NADP(+)</name>
        <dbReference type="ChEBI" id="CHEBI:58349"/>
    </ligand>
</feature>
<feature type="binding site" evidence="2">
    <location>
        <position position="172"/>
    </location>
    <ligand>
        <name>NADP(+)</name>
        <dbReference type="ChEBI" id="CHEBI:58349"/>
    </ligand>
</feature>
<feature type="binding site" evidence="2">
    <location>
        <position position="176"/>
    </location>
    <ligand>
        <name>NADP(+)</name>
        <dbReference type="ChEBI" id="CHEBI:58349"/>
    </ligand>
</feature>
<feature type="binding site" evidence="1">
    <location>
        <position position="206"/>
    </location>
    <ligand>
        <name>NADP(+)</name>
        <dbReference type="ChEBI" id="CHEBI:58349"/>
    </ligand>
</feature>
<accession>O13908</accession>
<comment type="subcellular location">
    <subcellularLocation>
        <location evidence="4">Cytoplasm</location>
    </subcellularLocation>
    <subcellularLocation>
        <location evidence="4">Nucleus</location>
    </subcellularLocation>
</comment>
<comment type="similarity">
    <text evidence="5">Belongs to the short-chain dehydrogenases/reductases (SDR) family.</text>
</comment>
<name>YF3H_SCHPO</name>
<proteinExistence type="inferred from homology"/>
<evidence type="ECO:0000250" key="1">
    <source>
        <dbReference type="UniProtKB" id="L0E2Z4"/>
    </source>
</evidence>
<evidence type="ECO:0000250" key="2">
    <source>
        <dbReference type="UniProtKB" id="O93868"/>
    </source>
</evidence>
<evidence type="ECO:0000255" key="3">
    <source>
        <dbReference type="PROSITE-ProRule" id="PRU10001"/>
    </source>
</evidence>
<evidence type="ECO:0000269" key="4">
    <source>
    </source>
</evidence>
<evidence type="ECO:0000305" key="5"/>
<sequence length="261" mass="27898">MVAPAHNYESRNILDLLSLKGKNAVVFGGARGIGHAICSVFAEAGANAFIVYNTTPGEKAAKEIAQANGVKTYTCKCDVTIPKEVEHAFAEIQKVFDTIDIVVPNNGICTGKSAIDMTYEEFANEINVNLLGVFNVAHNAGPIFQKQGHGSLVATASMSGVVVNVPQQQCAYNTSKAGVIQLIKSLAVEWRKFARVNCVSPGYTTSDMTGGKFHKEWEPYTPFERNGLAKEIASAYLYLASDAASYASGTNLIVDGGYTSI</sequence>
<protein>
    <recommendedName>
        <fullName>Uncharacterized oxidoreductase C22A12.17c</fullName>
        <ecNumber>1.-.-.-</ecNumber>
    </recommendedName>
</protein>
<organism>
    <name type="scientific">Schizosaccharomyces pombe (strain 972 / ATCC 24843)</name>
    <name type="common">Fission yeast</name>
    <dbReference type="NCBI Taxonomy" id="284812"/>
    <lineage>
        <taxon>Eukaryota</taxon>
        <taxon>Fungi</taxon>
        <taxon>Dikarya</taxon>
        <taxon>Ascomycota</taxon>
        <taxon>Taphrinomycotina</taxon>
        <taxon>Schizosaccharomycetes</taxon>
        <taxon>Schizosaccharomycetales</taxon>
        <taxon>Schizosaccharomycetaceae</taxon>
        <taxon>Schizosaccharomyces</taxon>
    </lineage>
</organism>
<dbReference type="EC" id="1.-.-.-"/>
<dbReference type="EMBL" id="CU329670">
    <property type="protein sequence ID" value="CAB16587.1"/>
    <property type="molecule type" value="Genomic_DNA"/>
</dbReference>
<dbReference type="PIR" id="T38157">
    <property type="entry name" value="T38157"/>
</dbReference>
<dbReference type="RefSeq" id="NP_593247.1">
    <property type="nucleotide sequence ID" value="NM_001018644.2"/>
</dbReference>
<dbReference type="SMR" id="O13908"/>
<dbReference type="BioGRID" id="278335">
    <property type="interactions" value="5"/>
</dbReference>
<dbReference type="FunCoup" id="O13908">
    <property type="interactions" value="47"/>
</dbReference>
<dbReference type="STRING" id="284812.O13908"/>
<dbReference type="PaxDb" id="4896-SPAC22A12.17c.1"/>
<dbReference type="EnsemblFungi" id="SPAC22A12.17c.1">
    <property type="protein sequence ID" value="SPAC22A12.17c.1:pep"/>
    <property type="gene ID" value="SPAC22A12.17c"/>
</dbReference>
<dbReference type="KEGG" id="spo:2541844"/>
<dbReference type="PomBase" id="SPAC22A12.17c"/>
<dbReference type="VEuPathDB" id="FungiDB:SPAC22A12.17c"/>
<dbReference type="eggNOG" id="KOG0725">
    <property type="taxonomic scope" value="Eukaryota"/>
</dbReference>
<dbReference type="HOGENOM" id="CLU_010194_1_1_1"/>
<dbReference type="InParanoid" id="O13908"/>
<dbReference type="OMA" id="YLLCIPE"/>
<dbReference type="PhylomeDB" id="O13908"/>
<dbReference type="PRO" id="PR:O13908"/>
<dbReference type="Proteomes" id="UP000002485">
    <property type="component" value="Chromosome I"/>
</dbReference>
<dbReference type="GO" id="GO:0005829">
    <property type="term" value="C:cytosol"/>
    <property type="evidence" value="ECO:0007005"/>
    <property type="project" value="PomBase"/>
</dbReference>
<dbReference type="GO" id="GO:0005634">
    <property type="term" value="C:nucleus"/>
    <property type="evidence" value="ECO:0007005"/>
    <property type="project" value="PomBase"/>
</dbReference>
<dbReference type="GO" id="GO:0016616">
    <property type="term" value="F:oxidoreductase activity, acting on the CH-OH group of donors, NAD or NADP as acceptor"/>
    <property type="evidence" value="ECO:0000318"/>
    <property type="project" value="GO_Central"/>
</dbReference>
<dbReference type="CDD" id="cd05352">
    <property type="entry name" value="MDH-like_SDR_c"/>
    <property type="match status" value="1"/>
</dbReference>
<dbReference type="FunFam" id="3.40.50.720:FF:001497">
    <property type="entry name" value="Uncharacterized oxidoreductase C1739.08c"/>
    <property type="match status" value="1"/>
</dbReference>
<dbReference type="Gene3D" id="3.40.50.720">
    <property type="entry name" value="NAD(P)-binding Rossmann-like Domain"/>
    <property type="match status" value="1"/>
</dbReference>
<dbReference type="InterPro" id="IPR036291">
    <property type="entry name" value="NAD(P)-bd_dom_sf"/>
</dbReference>
<dbReference type="InterPro" id="IPR020904">
    <property type="entry name" value="Sc_DH/Rdtase_CS"/>
</dbReference>
<dbReference type="InterPro" id="IPR002347">
    <property type="entry name" value="SDR_fam"/>
</dbReference>
<dbReference type="PANTHER" id="PTHR43008">
    <property type="entry name" value="BENZIL REDUCTASE"/>
    <property type="match status" value="1"/>
</dbReference>
<dbReference type="PANTHER" id="PTHR43008:SF13">
    <property type="entry name" value="L-XYLULOSE REDUCTASE-RELATED"/>
    <property type="match status" value="1"/>
</dbReference>
<dbReference type="Pfam" id="PF13561">
    <property type="entry name" value="adh_short_C2"/>
    <property type="match status" value="1"/>
</dbReference>
<dbReference type="PRINTS" id="PR00081">
    <property type="entry name" value="GDHRDH"/>
</dbReference>
<dbReference type="PRINTS" id="PR00080">
    <property type="entry name" value="SDRFAMILY"/>
</dbReference>
<dbReference type="SUPFAM" id="SSF51735">
    <property type="entry name" value="NAD(P)-binding Rossmann-fold domains"/>
    <property type="match status" value="1"/>
</dbReference>
<dbReference type="PROSITE" id="PS00061">
    <property type="entry name" value="ADH_SHORT"/>
    <property type="match status" value="1"/>
</dbReference>
<keyword id="KW-0963">Cytoplasm</keyword>
<keyword id="KW-0521">NADP</keyword>
<keyword id="KW-0539">Nucleus</keyword>
<keyword id="KW-0560">Oxidoreductase</keyword>
<keyword id="KW-1185">Reference proteome</keyword>